<accession>A8FGA1</accession>
<sequence length="200" mass="22853">MARYTGPSWKISRRLGISLSGTGKELEKRPYAPGPHGPGQRKKLSEYGLQLQEKQKLRHMYGVNERQFRTLFDKAAKLPGKQGENFMILLETRLDNLVYRLGLARTRRQARQLVNHGHILVDGSRVDIPSFSVKPGQTIALREKSQNLAVVKESVEVNSFVPEYLTFDAEKLEGTFTRLPERSELAPEISEQLIVEFYSR</sequence>
<comment type="function">
    <text evidence="1">One of the primary rRNA binding proteins, it binds directly to 16S rRNA where it nucleates assembly of the body of the 30S subunit.</text>
</comment>
<comment type="function">
    <text evidence="1">With S5 and S12 plays an important role in translational accuracy.</text>
</comment>
<comment type="subunit">
    <text evidence="1">Part of the 30S ribosomal subunit. Contacts protein S5. The interaction surface between S4 and S5 is involved in control of translational fidelity.</text>
</comment>
<comment type="similarity">
    <text evidence="1">Belongs to the universal ribosomal protein uS4 family.</text>
</comment>
<keyword id="KW-0687">Ribonucleoprotein</keyword>
<keyword id="KW-0689">Ribosomal protein</keyword>
<keyword id="KW-0694">RNA-binding</keyword>
<keyword id="KW-0699">rRNA-binding</keyword>
<organism>
    <name type="scientific">Bacillus pumilus (strain SAFR-032)</name>
    <dbReference type="NCBI Taxonomy" id="315750"/>
    <lineage>
        <taxon>Bacteria</taxon>
        <taxon>Bacillati</taxon>
        <taxon>Bacillota</taxon>
        <taxon>Bacilli</taxon>
        <taxon>Bacillales</taxon>
        <taxon>Bacillaceae</taxon>
        <taxon>Bacillus</taxon>
    </lineage>
</organism>
<gene>
    <name evidence="1" type="primary">rpsD</name>
    <name type="ordered locus">BPUM_2610</name>
</gene>
<evidence type="ECO:0000255" key="1">
    <source>
        <dbReference type="HAMAP-Rule" id="MF_01306"/>
    </source>
</evidence>
<evidence type="ECO:0000256" key="2">
    <source>
        <dbReference type="SAM" id="MobiDB-lite"/>
    </source>
</evidence>
<evidence type="ECO:0000305" key="3"/>
<reference key="1">
    <citation type="journal article" date="2007" name="PLoS ONE">
        <title>Paradoxical DNA repair and peroxide resistance gene conservation in Bacillus pumilus SAFR-032.</title>
        <authorList>
            <person name="Gioia J."/>
            <person name="Yerrapragada S."/>
            <person name="Qin X."/>
            <person name="Jiang H."/>
            <person name="Igboeli O.C."/>
            <person name="Muzny D."/>
            <person name="Dugan-Rocha S."/>
            <person name="Ding Y."/>
            <person name="Hawes A."/>
            <person name="Liu W."/>
            <person name="Perez L."/>
            <person name="Kovar C."/>
            <person name="Dinh H."/>
            <person name="Lee S."/>
            <person name="Nazareth L."/>
            <person name="Blyth P."/>
            <person name="Holder M."/>
            <person name="Buhay C."/>
            <person name="Tirumalai M.R."/>
            <person name="Liu Y."/>
            <person name="Dasgupta I."/>
            <person name="Bokhetache L."/>
            <person name="Fujita M."/>
            <person name="Karouia F."/>
            <person name="Eswara Moorthy P."/>
            <person name="Siefert J."/>
            <person name="Uzman A."/>
            <person name="Buzumbo P."/>
            <person name="Verma A."/>
            <person name="Zwiya H."/>
            <person name="McWilliams B.D."/>
            <person name="Olowu A."/>
            <person name="Clinkenbeard K.D."/>
            <person name="Newcombe D."/>
            <person name="Golebiewski L."/>
            <person name="Petrosino J.F."/>
            <person name="Nicholson W.L."/>
            <person name="Fox G.E."/>
            <person name="Venkateswaran K."/>
            <person name="Highlander S.K."/>
            <person name="Weinstock G.M."/>
        </authorList>
    </citation>
    <scope>NUCLEOTIDE SEQUENCE [LARGE SCALE GENOMIC DNA]</scope>
    <source>
        <strain>SAFR-032</strain>
    </source>
</reference>
<dbReference type="EMBL" id="CP000813">
    <property type="protein sequence ID" value="ABV63268.1"/>
    <property type="molecule type" value="Genomic_DNA"/>
</dbReference>
<dbReference type="RefSeq" id="WP_012010904.1">
    <property type="nucleotide sequence ID" value="NZ_VEIS01000006.1"/>
</dbReference>
<dbReference type="SMR" id="A8FGA1"/>
<dbReference type="STRING" id="315750.BPUM_2610"/>
<dbReference type="GeneID" id="5621875"/>
<dbReference type="KEGG" id="bpu:BPUM_2610"/>
<dbReference type="eggNOG" id="COG0522">
    <property type="taxonomic scope" value="Bacteria"/>
</dbReference>
<dbReference type="HOGENOM" id="CLU_092403_0_1_9"/>
<dbReference type="OrthoDB" id="9803672at2"/>
<dbReference type="Proteomes" id="UP000001355">
    <property type="component" value="Chromosome"/>
</dbReference>
<dbReference type="GO" id="GO:0015935">
    <property type="term" value="C:small ribosomal subunit"/>
    <property type="evidence" value="ECO:0007669"/>
    <property type="project" value="InterPro"/>
</dbReference>
<dbReference type="GO" id="GO:0019843">
    <property type="term" value="F:rRNA binding"/>
    <property type="evidence" value="ECO:0007669"/>
    <property type="project" value="UniProtKB-UniRule"/>
</dbReference>
<dbReference type="GO" id="GO:0003735">
    <property type="term" value="F:structural constituent of ribosome"/>
    <property type="evidence" value="ECO:0007669"/>
    <property type="project" value="InterPro"/>
</dbReference>
<dbReference type="GO" id="GO:0042274">
    <property type="term" value="P:ribosomal small subunit biogenesis"/>
    <property type="evidence" value="ECO:0007669"/>
    <property type="project" value="TreeGrafter"/>
</dbReference>
<dbReference type="GO" id="GO:0006412">
    <property type="term" value="P:translation"/>
    <property type="evidence" value="ECO:0007669"/>
    <property type="project" value="UniProtKB-UniRule"/>
</dbReference>
<dbReference type="CDD" id="cd00165">
    <property type="entry name" value="S4"/>
    <property type="match status" value="1"/>
</dbReference>
<dbReference type="FunFam" id="1.10.1050.10:FF:000001">
    <property type="entry name" value="30S ribosomal protein S4"/>
    <property type="match status" value="1"/>
</dbReference>
<dbReference type="FunFam" id="3.10.290.10:FF:000001">
    <property type="entry name" value="30S ribosomal protein S4"/>
    <property type="match status" value="1"/>
</dbReference>
<dbReference type="Gene3D" id="1.10.1050.10">
    <property type="entry name" value="Ribosomal Protein S4 Delta 41, Chain A, domain 1"/>
    <property type="match status" value="1"/>
</dbReference>
<dbReference type="Gene3D" id="3.10.290.10">
    <property type="entry name" value="RNA-binding S4 domain"/>
    <property type="match status" value="1"/>
</dbReference>
<dbReference type="HAMAP" id="MF_01306_B">
    <property type="entry name" value="Ribosomal_uS4_B"/>
    <property type="match status" value="1"/>
</dbReference>
<dbReference type="InterPro" id="IPR022801">
    <property type="entry name" value="Ribosomal_uS4"/>
</dbReference>
<dbReference type="InterPro" id="IPR005709">
    <property type="entry name" value="Ribosomal_uS4_bac-type"/>
</dbReference>
<dbReference type="InterPro" id="IPR018079">
    <property type="entry name" value="Ribosomal_uS4_CS"/>
</dbReference>
<dbReference type="InterPro" id="IPR001912">
    <property type="entry name" value="Ribosomal_uS4_N"/>
</dbReference>
<dbReference type="InterPro" id="IPR002942">
    <property type="entry name" value="S4_RNA-bd"/>
</dbReference>
<dbReference type="InterPro" id="IPR036986">
    <property type="entry name" value="S4_RNA-bd_sf"/>
</dbReference>
<dbReference type="NCBIfam" id="NF003717">
    <property type="entry name" value="PRK05327.1"/>
    <property type="match status" value="1"/>
</dbReference>
<dbReference type="NCBIfam" id="TIGR01017">
    <property type="entry name" value="rpsD_bact"/>
    <property type="match status" value="1"/>
</dbReference>
<dbReference type="PANTHER" id="PTHR11831">
    <property type="entry name" value="30S 40S RIBOSOMAL PROTEIN"/>
    <property type="match status" value="1"/>
</dbReference>
<dbReference type="PANTHER" id="PTHR11831:SF4">
    <property type="entry name" value="SMALL RIBOSOMAL SUBUNIT PROTEIN US4M"/>
    <property type="match status" value="1"/>
</dbReference>
<dbReference type="Pfam" id="PF00163">
    <property type="entry name" value="Ribosomal_S4"/>
    <property type="match status" value="1"/>
</dbReference>
<dbReference type="Pfam" id="PF01479">
    <property type="entry name" value="S4"/>
    <property type="match status" value="1"/>
</dbReference>
<dbReference type="SMART" id="SM01390">
    <property type="entry name" value="Ribosomal_S4"/>
    <property type="match status" value="1"/>
</dbReference>
<dbReference type="SMART" id="SM00363">
    <property type="entry name" value="S4"/>
    <property type="match status" value="1"/>
</dbReference>
<dbReference type="SUPFAM" id="SSF55174">
    <property type="entry name" value="Alpha-L RNA-binding motif"/>
    <property type="match status" value="1"/>
</dbReference>
<dbReference type="PROSITE" id="PS00632">
    <property type="entry name" value="RIBOSOMAL_S4"/>
    <property type="match status" value="1"/>
</dbReference>
<dbReference type="PROSITE" id="PS50889">
    <property type="entry name" value="S4"/>
    <property type="match status" value="1"/>
</dbReference>
<protein>
    <recommendedName>
        <fullName evidence="1">Small ribosomal subunit protein uS4</fullName>
    </recommendedName>
    <alternativeName>
        <fullName evidence="3">30S ribosomal protein S4</fullName>
    </alternativeName>
</protein>
<name>RS4_BACP2</name>
<feature type="chain" id="PRO_0000322267" description="Small ribosomal subunit protein uS4">
    <location>
        <begin position="1"/>
        <end position="200"/>
    </location>
</feature>
<feature type="domain" description="S4 RNA-binding" evidence="1">
    <location>
        <begin position="92"/>
        <end position="155"/>
    </location>
</feature>
<feature type="region of interest" description="Disordered" evidence="2">
    <location>
        <begin position="22"/>
        <end position="42"/>
    </location>
</feature>
<proteinExistence type="inferred from homology"/>